<sequence>MNSTCCSACKVMKCDCAPNCIFAPHFPLTNLETFERLHRIFGAGNVFKILANLDPIQRETAVNALCYEAEALERDPIFGCVGIFNHYKNQLQNLDEQINSAKNELAAIIGLDNVPQYSSIPMPADFLTNKFSLHPYIEKMEGLDEVQKKELMQLPPVDAQVIVNEMFRKRGNIKICGGHGDACASTSGGTSATQKTLPFPQNHNQP</sequence>
<gene>
    <name type="primary">LBD35</name>
    <name type="synonym">ASL27</name>
    <name type="ordered locus">At5g35900</name>
    <name type="ORF">MIK22.21</name>
</gene>
<accession>Q9FFL3</accession>
<accession>B7XG81</accession>
<accession>Q4PSE0</accession>
<dbReference type="EMBL" id="AB473860">
    <property type="protein sequence ID" value="BAH10571.1"/>
    <property type="molecule type" value="mRNA"/>
</dbReference>
<dbReference type="EMBL" id="AB005236">
    <property type="protein sequence ID" value="BAB09931.1"/>
    <property type="molecule type" value="Genomic_DNA"/>
</dbReference>
<dbReference type="EMBL" id="CP002688">
    <property type="protein sequence ID" value="AED94024.1"/>
    <property type="molecule type" value="Genomic_DNA"/>
</dbReference>
<dbReference type="EMBL" id="DQ056696">
    <property type="protein sequence ID" value="AAY78842.1"/>
    <property type="molecule type" value="mRNA"/>
</dbReference>
<dbReference type="RefSeq" id="NP_198439.1">
    <property type="nucleotide sequence ID" value="NM_122981.4"/>
</dbReference>
<dbReference type="SMR" id="Q9FFL3"/>
<dbReference type="BioGRID" id="18828">
    <property type="interactions" value="11"/>
</dbReference>
<dbReference type="IntAct" id="Q9FFL3">
    <property type="interactions" value="9"/>
</dbReference>
<dbReference type="STRING" id="3702.Q9FFL3"/>
<dbReference type="PaxDb" id="3702-AT5G35900.1"/>
<dbReference type="EnsemblPlants" id="AT5G35900.1">
    <property type="protein sequence ID" value="AT5G35900.1"/>
    <property type="gene ID" value="AT5G35900"/>
</dbReference>
<dbReference type="GeneID" id="833576"/>
<dbReference type="Gramene" id="AT5G35900.1">
    <property type="protein sequence ID" value="AT5G35900.1"/>
    <property type="gene ID" value="AT5G35900"/>
</dbReference>
<dbReference type="KEGG" id="ath:AT5G35900"/>
<dbReference type="Araport" id="AT5G35900"/>
<dbReference type="TAIR" id="AT5G35900">
    <property type="gene designation" value="LBD35"/>
</dbReference>
<dbReference type="HOGENOM" id="CLU_122110_0_0_1"/>
<dbReference type="InParanoid" id="Q9FFL3"/>
<dbReference type="OMA" id="EPWQREY"/>
<dbReference type="PhylomeDB" id="Q9FFL3"/>
<dbReference type="PRO" id="PR:Q9FFL3"/>
<dbReference type="Proteomes" id="UP000006548">
    <property type="component" value="Chromosome 5"/>
</dbReference>
<dbReference type="ExpressionAtlas" id="Q9FFL3">
    <property type="expression patterns" value="baseline and differential"/>
</dbReference>
<dbReference type="InterPro" id="IPR004883">
    <property type="entry name" value="LOB"/>
</dbReference>
<dbReference type="PANTHER" id="PTHR31301:SF68">
    <property type="entry name" value="LOB DOMAIN-CONTAINING PROTEIN 32-RELATED"/>
    <property type="match status" value="1"/>
</dbReference>
<dbReference type="PANTHER" id="PTHR31301">
    <property type="entry name" value="LOB DOMAIN-CONTAINING PROTEIN 4-RELATED"/>
    <property type="match status" value="1"/>
</dbReference>
<dbReference type="Pfam" id="PF03195">
    <property type="entry name" value="LOB"/>
    <property type="match status" value="1"/>
</dbReference>
<dbReference type="PROSITE" id="PS50891">
    <property type="entry name" value="LOB"/>
    <property type="match status" value="1"/>
</dbReference>
<comment type="similarity">
    <text evidence="3">Belongs to the LOB domain-containing protein family.</text>
</comment>
<keyword id="KW-1185">Reference proteome</keyword>
<evidence type="ECO:0000255" key="1">
    <source>
        <dbReference type="PROSITE-ProRule" id="PRU00291"/>
    </source>
</evidence>
<evidence type="ECO:0000256" key="2">
    <source>
        <dbReference type="SAM" id="MobiDB-lite"/>
    </source>
</evidence>
<evidence type="ECO:0000305" key="3"/>
<reference key="1">
    <citation type="journal article" date="2009" name="Plant J.">
        <title>Characterization of genes in the ASYMMETRIC LEAVES2/LATERAL ORGAN BOUNDARIES (AS2/LOB) family in Arabidopsis thaliana, and functional and molecular comparisons between AS2 and other family members.</title>
        <authorList>
            <person name="Matsumura Y."/>
            <person name="Iwakawa H."/>
            <person name="Machida Y."/>
            <person name="Machida C."/>
        </authorList>
    </citation>
    <scope>NUCLEOTIDE SEQUENCE [MRNA]</scope>
    <source>
        <strain>cv. Columbia</strain>
    </source>
</reference>
<reference key="2">
    <citation type="journal article" date="1997" name="DNA Res.">
        <title>Structural analysis of Arabidopsis thaliana chromosome 5. I. Sequence features of the 1.6 Mb regions covered by twenty physically assigned P1 clones.</title>
        <authorList>
            <person name="Sato S."/>
            <person name="Kotani H."/>
            <person name="Nakamura Y."/>
            <person name="Kaneko T."/>
            <person name="Asamizu E."/>
            <person name="Fukami M."/>
            <person name="Miyajima N."/>
            <person name="Tabata S."/>
        </authorList>
    </citation>
    <scope>NUCLEOTIDE SEQUENCE [LARGE SCALE GENOMIC DNA]</scope>
    <source>
        <strain>cv. Columbia</strain>
    </source>
</reference>
<reference key="3">
    <citation type="journal article" date="2017" name="Plant J.">
        <title>Araport11: a complete reannotation of the Arabidopsis thaliana reference genome.</title>
        <authorList>
            <person name="Cheng C.Y."/>
            <person name="Krishnakumar V."/>
            <person name="Chan A.P."/>
            <person name="Thibaud-Nissen F."/>
            <person name="Schobel S."/>
            <person name="Town C.D."/>
        </authorList>
    </citation>
    <scope>GENOME REANNOTATION</scope>
    <source>
        <strain>cv. Columbia</strain>
    </source>
</reference>
<reference key="4">
    <citation type="submission" date="2005-05" db="EMBL/GenBank/DDBJ databases">
        <authorList>
            <person name="Underwood B.A."/>
            <person name="Xiao Y.-L."/>
            <person name="Moskal W.A. Jr."/>
            <person name="Monaghan E.L."/>
            <person name="Wang W."/>
            <person name="Redman J.C."/>
            <person name="Wu H.C."/>
            <person name="Utterback T."/>
            <person name="Town C.D."/>
        </authorList>
    </citation>
    <scope>NUCLEOTIDE SEQUENCE [LARGE SCALE MRNA]</scope>
    <source>
        <strain>cv. Columbia</strain>
    </source>
</reference>
<reference key="5">
    <citation type="journal article" date="2002" name="Plant Physiol.">
        <title>The LATERAL ORGAN BOUNDARIES gene defines a novel, plant-specific gene family.</title>
        <authorList>
            <person name="Shuai B."/>
            <person name="Reynaga-Pena C.G."/>
            <person name="Springer P.S."/>
        </authorList>
    </citation>
    <scope>GENE FAMILY</scope>
    <scope>NOMENCLATURE</scope>
</reference>
<reference key="6">
    <citation type="journal article" date="2002" name="Plant Cell Physiol.">
        <title>The ASYMMETRIC LEAVES2 gene of Arabidopsis thaliana, required for formation of a symmetric flat leaf lamina, encodes a member of a novel family of proteins characterized by cysteine repeats and a leucine zipper.</title>
        <authorList>
            <person name="Iwakawa H."/>
            <person name="Ueno Y."/>
            <person name="Semiarti E."/>
            <person name="Onouchi H."/>
            <person name="Kojima S."/>
            <person name="Tsukaya H."/>
            <person name="Hasebe M."/>
            <person name="Soma T."/>
            <person name="Ikezaki M."/>
            <person name="Machida C."/>
            <person name="Machida Y."/>
        </authorList>
    </citation>
    <scope>GENE FAMILY</scope>
    <scope>NOMENCLATURE</scope>
</reference>
<feature type="chain" id="PRO_0000132286" description="LOB domain-containing protein 35">
    <location>
        <begin position="1"/>
        <end position="206"/>
    </location>
</feature>
<feature type="domain" description="LOB" evidence="1">
    <location>
        <begin position="4"/>
        <end position="105"/>
    </location>
</feature>
<feature type="region of interest" description="Disordered" evidence="2">
    <location>
        <begin position="184"/>
        <end position="206"/>
    </location>
</feature>
<protein>
    <recommendedName>
        <fullName>LOB domain-containing protein 35</fullName>
    </recommendedName>
    <alternativeName>
        <fullName>ASYMMETRIC LEAVES 2-like protein 27</fullName>
        <shortName>AS2-like protein 27</shortName>
    </alternativeName>
</protein>
<name>LBD35_ARATH</name>
<proteinExistence type="evidence at transcript level"/>
<organism>
    <name type="scientific">Arabidopsis thaliana</name>
    <name type="common">Mouse-ear cress</name>
    <dbReference type="NCBI Taxonomy" id="3702"/>
    <lineage>
        <taxon>Eukaryota</taxon>
        <taxon>Viridiplantae</taxon>
        <taxon>Streptophyta</taxon>
        <taxon>Embryophyta</taxon>
        <taxon>Tracheophyta</taxon>
        <taxon>Spermatophyta</taxon>
        <taxon>Magnoliopsida</taxon>
        <taxon>eudicotyledons</taxon>
        <taxon>Gunneridae</taxon>
        <taxon>Pentapetalae</taxon>
        <taxon>rosids</taxon>
        <taxon>malvids</taxon>
        <taxon>Brassicales</taxon>
        <taxon>Brassicaceae</taxon>
        <taxon>Camelineae</taxon>
        <taxon>Arabidopsis</taxon>
    </lineage>
</organism>